<protein>
    <recommendedName>
        <fullName evidence="6">Desampylase</fullName>
        <ecNumber evidence="3">3.4.19.15</ecNumber>
    </recommendedName>
    <alternativeName>
        <fullName evidence="4">JAMM/MPN(+) metalloprotease</fullName>
    </alternativeName>
    <alternativeName>
        <fullName evidence="4">PfJAMM1</fullName>
    </alternativeName>
</protein>
<feature type="chain" id="PRO_0000441760" description="Desampylase">
    <location>
        <begin position="1"/>
        <end position="140"/>
    </location>
</feature>
<feature type="domain" description="MPN" evidence="2">
    <location>
        <begin position="13"/>
        <end position="133"/>
    </location>
</feature>
<feature type="short sequence motif" description="JAMM motif" evidence="2">
    <location>
        <begin position="88"/>
        <end position="101"/>
    </location>
</feature>
<feature type="active site" description="Proton donor/acceptor" evidence="1">
    <location>
        <position position="34"/>
    </location>
</feature>
<feature type="binding site" evidence="3 8">
    <location>
        <position position="88"/>
    </location>
    <ligand>
        <name>Zn(2+)</name>
        <dbReference type="ChEBI" id="CHEBI:29105"/>
    </ligand>
</feature>
<feature type="binding site" evidence="3 8">
    <location>
        <position position="90"/>
    </location>
    <ligand>
        <name>Zn(2+)</name>
        <dbReference type="ChEBI" id="CHEBI:29105"/>
    </ligand>
</feature>
<feature type="binding site" evidence="3 8">
    <location>
        <position position="101"/>
    </location>
    <ligand>
        <name>Zn(2+)</name>
        <dbReference type="ChEBI" id="CHEBI:29105"/>
    </ligand>
</feature>
<feature type="site" description="Transition state stabilizer" evidence="1">
    <location>
        <position position="98"/>
    </location>
</feature>
<feature type="disulfide bond" description="Interchain" evidence="3 8">
    <location>
        <position position="93"/>
    </location>
</feature>
<feature type="mutagenesis site" description="Loss of catalytic activity." evidence="3">
    <original>E</original>
    <variation>A</variation>
    <location>
        <position position="34"/>
    </location>
</feature>
<feature type="mutagenesis site" description="Loss of catalytic activity." evidence="3">
    <original>MLKALE</original>
    <variation>AAKAAA</variation>
    <location>
        <begin position="69"/>
        <end position="74"/>
    </location>
</feature>
<feature type="mutagenesis site" description="2.4-fold decrease in substrate affinity." evidence="3">
    <original>L</original>
    <variation>A</variation>
    <location>
        <position position="70"/>
    </location>
</feature>
<feature type="mutagenesis site" description="Is still catalytically active." evidence="3">
    <original>C</original>
    <variation>S</variation>
    <location>
        <position position="93"/>
    </location>
</feature>
<feature type="mutagenesis site" description="Loss of catalytic activity." evidence="3">
    <original>D</original>
    <variation>A</variation>
    <location>
        <position position="101"/>
    </location>
</feature>
<feature type="mutagenesis site" description="Nearly no effect on substrate affinity." evidence="3">
    <original>W</original>
    <variation>A</variation>
    <location>
        <position position="108"/>
    </location>
</feature>
<feature type="strand" evidence="10">
    <location>
        <begin position="13"/>
        <end position="16"/>
    </location>
</feature>
<feature type="helix" evidence="10">
    <location>
        <begin position="18"/>
        <end position="30"/>
    </location>
</feature>
<feature type="strand" evidence="10">
    <location>
        <begin position="36"/>
        <end position="42"/>
    </location>
</feature>
<feature type="strand" evidence="10">
    <location>
        <begin position="45"/>
        <end position="52"/>
    </location>
</feature>
<feature type="strand" evidence="11">
    <location>
        <begin position="62"/>
        <end position="64"/>
    </location>
</feature>
<feature type="helix" evidence="10">
    <location>
        <begin position="66"/>
        <end position="78"/>
    </location>
</feature>
<feature type="strand" evidence="10">
    <location>
        <begin position="82"/>
        <end position="93"/>
    </location>
</feature>
<feature type="helix" evidence="10">
    <location>
        <begin position="99"/>
        <end position="107"/>
    </location>
</feature>
<feature type="strand" evidence="10">
    <location>
        <begin position="110"/>
        <end position="116"/>
    </location>
</feature>
<feature type="strand" evidence="10">
    <location>
        <begin position="121"/>
        <end position="126"/>
    </location>
</feature>
<feature type="strand" evidence="10">
    <location>
        <begin position="132"/>
        <end position="139"/>
    </location>
</feature>
<organism>
    <name type="scientific">Pyrococcus furiosus (strain ATCC 43587 / DSM 3638 / JCM 8422 / Vc1)</name>
    <dbReference type="NCBI Taxonomy" id="186497"/>
    <lineage>
        <taxon>Archaea</taxon>
        <taxon>Methanobacteriati</taxon>
        <taxon>Methanobacteriota</taxon>
        <taxon>Thermococci</taxon>
        <taxon>Thermococcales</taxon>
        <taxon>Thermococcaceae</taxon>
        <taxon>Pyrococcus</taxon>
    </lineage>
</organism>
<name>JAMM1_PYRFU</name>
<accession>Q8U1Y4</accession>
<keyword id="KW-0002">3D-structure</keyword>
<keyword id="KW-1015">Disulfide bond</keyword>
<keyword id="KW-0378">Hydrolase</keyword>
<keyword id="KW-0479">Metal-binding</keyword>
<keyword id="KW-0482">Metalloprotease</keyword>
<keyword id="KW-0645">Protease</keyword>
<keyword id="KW-1185">Reference proteome</keyword>
<keyword id="KW-0862">Zinc</keyword>
<comment type="function">
    <text evidence="3">Metalloprotease that displays desampylase (DSAMP) activity, cleaving ubiquitin-like small archaeal modifier proteins (SAMP1, SAMP2 and SAMP3) from protein conjugates (isopeptide- and linear-linked). Thus, likely regulates sampylation and the pools of 'free' SAMP available for protein modification. In vitro, is also able to cleave non-physiological ubiquitin (Ub) substrates, such as 'Met1-', 'Lys48-', and 'Lys63'-linked Ub dimers (Ub2), and to remove Ub tags from diverse proteins.</text>
</comment>
<comment type="catalytic activity">
    <reaction evidence="3">
        <text>an N(6)-[small archaeal modifier protein]-[protein]-L-lysine + H2O = a [protein]-L-lysine + a [small archaeal modifier protein].</text>
        <dbReference type="EC" id="3.4.19.15"/>
    </reaction>
</comment>
<comment type="cofactor">
    <cofactor evidence="3">
        <name>Zn(2+)</name>
        <dbReference type="ChEBI" id="CHEBI:29105"/>
    </cofactor>
    <text evidence="3">Binds 1 zinc ion per subunit.</text>
</comment>
<comment type="activity regulation">
    <text evidence="3">Inhibited by EDTA in vitro.</text>
</comment>
<comment type="biophysicochemical properties">
    <kinetics>
        <KM evidence="3">14.2 uM for SAMP2 dimer (with PfJAMM1 in the dimeric form, at 100 degrees Celsius)</KM>
        <KM evidence="3">15.5 uM for SAMP2 dimer (with PfJAMM1 in the monomeric form, at 100 degrees Celsius)</KM>
        <KM evidence="3">155 uM for M1-linked Ub dimer (with PfJAMM1 in the monomeric form, at 70 degrees Celsius)</KM>
        <text evidence="3">kcat is 0.28 min(-1) for the cleavage of SAMP2 dimer using PfJAMM1 in the dimeric form. kcat is 0.16 min(-1) for the cleavage of SAMP2 dimer using PfJAMM1 in the monomeric form (at 100 degrees Celsius). kcat is 0.0016 min(-1) for the cleavage of M1-linked Ub dimer using PfJAMM1 in the monomeric form (at 70 degrees Celsius).</text>
    </kinetics>
    <temperatureDependence>
        <text evidence="3">Optimum temperature is 100 degrees Celsius.</text>
    </temperatureDependence>
</comment>
<comment type="subunit">
    <text evidence="3">Exists in two major states: monomer and homodimer. Both conformational states are catalytically active.</text>
</comment>
<comment type="PTM">
    <text evidence="6">The disulfide bridge probably stabilizes the PfJAMM1 homodimer at the optimal growth temperature of the hyperthermophile.</text>
</comment>
<comment type="similarity">
    <text evidence="5">Belongs to the peptidase M67B family.</text>
</comment>
<reference key="1">
    <citation type="journal article" date="1999" name="Genetics">
        <title>Divergence of the hyperthermophilic archaea Pyrococcus furiosus and P. horikoshii inferred from complete genomic sequences.</title>
        <authorList>
            <person name="Maeder D.L."/>
            <person name="Weiss R.B."/>
            <person name="Dunn D.M."/>
            <person name="Cherry J.L."/>
            <person name="Gonzalez J.M."/>
            <person name="DiRuggiero J."/>
            <person name="Robb F.T."/>
        </authorList>
    </citation>
    <scope>NUCLEOTIDE SEQUENCE [LARGE SCALE GENOMIC DNA]</scope>
    <source>
        <strain>ATCC 43587 / DSM 3638 / JCM 8422 / Vc1</strain>
    </source>
</reference>
<reference evidence="8 9" key="2">
    <citation type="journal article" date="2017" name="Structure">
        <title>Structural insight into ubiquitin-like protein recognition and oligomeric states of JAMM/MPN+ proteases.</title>
        <authorList>
            <person name="Cao S."/>
            <person name="Engilberge S."/>
            <person name="Girard E."/>
            <person name="Gabel F."/>
            <person name="Franzetti B."/>
            <person name="Maupin-Furlow J.A."/>
        </authorList>
    </citation>
    <scope>X-RAY CRYSTALLOGRAPHY (1.73 ANGSTROMS) IN COMPLEXES WITH ZINC AND THE UBIQUITIN-LIKE PROTEIN SAMP2</scope>
    <scope>DISULFIDE BONDS</scope>
    <scope>FUNCTION</scope>
    <scope>CATALYTIC ACTIVITY</scope>
    <scope>COFACTOR</scope>
    <scope>BIOPHYSICOCHEMICAL PROPERTIES</scope>
    <scope>ACTIVITY REGULATION</scope>
    <scope>SUBUNIT</scope>
    <scope>MUTAGENESIS OF GLU-34; 69-MET--GLU-74; LEU-70; CYS-93; ASP-101 AND TRP-108</scope>
</reference>
<evidence type="ECO:0000250" key="1">
    <source>
        <dbReference type="UniProtKB" id="D4GTS4"/>
    </source>
</evidence>
<evidence type="ECO:0000255" key="2">
    <source>
        <dbReference type="PROSITE-ProRule" id="PRU01182"/>
    </source>
</evidence>
<evidence type="ECO:0000269" key="3">
    <source>
    </source>
</evidence>
<evidence type="ECO:0000303" key="4">
    <source>
    </source>
</evidence>
<evidence type="ECO:0000305" key="5"/>
<evidence type="ECO:0000305" key="6">
    <source>
    </source>
</evidence>
<evidence type="ECO:0000312" key="7">
    <source>
        <dbReference type="EMBL" id="AAL81194.1"/>
    </source>
</evidence>
<evidence type="ECO:0007744" key="8">
    <source>
        <dbReference type="PDB" id="5LD9"/>
    </source>
</evidence>
<evidence type="ECO:0007744" key="9">
    <source>
        <dbReference type="PDB" id="5LDA"/>
    </source>
</evidence>
<evidence type="ECO:0007829" key="10">
    <source>
        <dbReference type="PDB" id="5LD9"/>
    </source>
</evidence>
<evidence type="ECO:0007829" key="11">
    <source>
        <dbReference type="PDB" id="5LDA"/>
    </source>
</evidence>
<proteinExistence type="evidence at protein level"/>
<gene>
    <name evidence="7" type="ordered locus">PF1070</name>
</gene>
<dbReference type="EC" id="3.4.19.15" evidence="3"/>
<dbReference type="EMBL" id="AE009950">
    <property type="protein sequence ID" value="AAL81194.1"/>
    <property type="molecule type" value="Genomic_DNA"/>
</dbReference>
<dbReference type="RefSeq" id="WP_011012207.1">
    <property type="nucleotide sequence ID" value="NZ_CP023154.1"/>
</dbReference>
<dbReference type="PDB" id="5LD9">
    <property type="method" value="X-ray"/>
    <property type="resolution" value="1.73 A"/>
    <property type="chains" value="A/B=1-140"/>
</dbReference>
<dbReference type="PDB" id="5LDA">
    <property type="method" value="X-ray"/>
    <property type="resolution" value="1.90 A"/>
    <property type="chains" value="A=11-140"/>
</dbReference>
<dbReference type="PDBsum" id="5LD9"/>
<dbReference type="PDBsum" id="5LDA"/>
<dbReference type="SMR" id="Q8U1Y4"/>
<dbReference type="STRING" id="186497.PF1070"/>
<dbReference type="PaxDb" id="186497-PF1070"/>
<dbReference type="KEGG" id="pfu:PF1070"/>
<dbReference type="PATRIC" id="fig|186497.12.peg.1130"/>
<dbReference type="eggNOG" id="arCOG01138">
    <property type="taxonomic scope" value="Archaea"/>
</dbReference>
<dbReference type="HOGENOM" id="CLU_116765_4_2_2"/>
<dbReference type="OrthoDB" id="10589at2157"/>
<dbReference type="PhylomeDB" id="Q8U1Y4"/>
<dbReference type="SABIO-RK" id="Q8U1Y4"/>
<dbReference type="Proteomes" id="UP000001013">
    <property type="component" value="Chromosome"/>
</dbReference>
<dbReference type="GO" id="GO:0008235">
    <property type="term" value="F:metalloexopeptidase activity"/>
    <property type="evidence" value="ECO:0007669"/>
    <property type="project" value="TreeGrafter"/>
</dbReference>
<dbReference type="GO" id="GO:0008270">
    <property type="term" value="F:zinc ion binding"/>
    <property type="evidence" value="ECO:0007669"/>
    <property type="project" value="TreeGrafter"/>
</dbReference>
<dbReference type="GO" id="GO:0006508">
    <property type="term" value="P:proteolysis"/>
    <property type="evidence" value="ECO:0007669"/>
    <property type="project" value="UniProtKB-KW"/>
</dbReference>
<dbReference type="CDD" id="cd08070">
    <property type="entry name" value="MPN_like"/>
    <property type="match status" value="1"/>
</dbReference>
<dbReference type="Gene3D" id="3.40.140.10">
    <property type="entry name" value="Cytidine Deaminase, domain 2"/>
    <property type="match status" value="1"/>
</dbReference>
<dbReference type="InterPro" id="IPR028090">
    <property type="entry name" value="JAB_dom_prok"/>
</dbReference>
<dbReference type="InterPro" id="IPR000555">
    <property type="entry name" value="JAMM/MPN+_dom"/>
</dbReference>
<dbReference type="InterPro" id="IPR037518">
    <property type="entry name" value="MPN"/>
</dbReference>
<dbReference type="InterPro" id="IPR051929">
    <property type="entry name" value="VirAsm_ModProt"/>
</dbReference>
<dbReference type="PANTHER" id="PTHR34858">
    <property type="entry name" value="CYSO-CYSTEINE PEPTIDASE"/>
    <property type="match status" value="1"/>
</dbReference>
<dbReference type="PANTHER" id="PTHR34858:SF1">
    <property type="entry name" value="CYSO-CYSTEINE PEPTIDASE"/>
    <property type="match status" value="1"/>
</dbReference>
<dbReference type="Pfam" id="PF14464">
    <property type="entry name" value="Prok-JAB"/>
    <property type="match status" value="1"/>
</dbReference>
<dbReference type="SMART" id="SM00232">
    <property type="entry name" value="JAB_MPN"/>
    <property type="match status" value="1"/>
</dbReference>
<dbReference type="SUPFAM" id="SSF102712">
    <property type="entry name" value="JAB1/MPN domain"/>
    <property type="match status" value="1"/>
</dbReference>
<dbReference type="PROSITE" id="PS50249">
    <property type="entry name" value="MPN"/>
    <property type="match status" value="1"/>
</dbReference>
<sequence length="140" mass="16018">MPSSSKSDFSFSTLIIPQHYLRAILKVVSSSSVEVCGFLFGKENRVLKVRFIRNRLNSPVEFEMDPEEMLKALEEAEQENLEVVGIFHSHIACPPIPSGKDLEGMKRWPVIWLIVNEKGEYKAWILSEKNKISEVKIVVE</sequence>